<reference key="1">
    <citation type="journal article" date="2005" name="Nat. Biotechnol.">
        <title>Complete genome sequence of the plant commensal Pseudomonas fluorescens Pf-5.</title>
        <authorList>
            <person name="Paulsen I.T."/>
            <person name="Press C.M."/>
            <person name="Ravel J."/>
            <person name="Kobayashi D.Y."/>
            <person name="Myers G.S.A."/>
            <person name="Mavrodi D.V."/>
            <person name="DeBoy R.T."/>
            <person name="Seshadri R."/>
            <person name="Ren Q."/>
            <person name="Madupu R."/>
            <person name="Dodson R.J."/>
            <person name="Durkin A.S."/>
            <person name="Brinkac L.M."/>
            <person name="Daugherty S.C."/>
            <person name="Sullivan S.A."/>
            <person name="Rosovitz M.J."/>
            <person name="Gwinn M.L."/>
            <person name="Zhou L."/>
            <person name="Schneider D.J."/>
            <person name="Cartinhour S.W."/>
            <person name="Nelson W.C."/>
            <person name="Weidman J."/>
            <person name="Watkins K."/>
            <person name="Tran K."/>
            <person name="Khouri H."/>
            <person name="Pierson E.A."/>
            <person name="Pierson L.S. III"/>
            <person name="Thomashow L.S."/>
            <person name="Loper J.E."/>
        </authorList>
    </citation>
    <scope>NUCLEOTIDE SEQUENCE [LARGE SCALE GENOMIC DNA]</scope>
    <source>
        <strain>ATCC BAA-477 / NRRL B-23932 / Pf-5</strain>
    </source>
</reference>
<protein>
    <recommendedName>
        <fullName evidence="1">Glycine dehydrogenase (decarboxylating) 1</fullName>
        <ecNumber evidence="1">1.4.4.2</ecNumber>
    </recommendedName>
    <alternativeName>
        <fullName evidence="1">Glycine cleavage system P-protein 1</fullName>
    </alternativeName>
    <alternativeName>
        <fullName evidence="1">Glycine decarboxylase 1</fullName>
    </alternativeName>
    <alternativeName>
        <fullName evidence="1">Glycine dehydrogenase (aminomethyl-transferring) 1</fullName>
    </alternativeName>
</protein>
<accession>Q4K7Q8</accession>
<comment type="function">
    <text evidence="1">The glycine cleavage system catalyzes the degradation of glycine. The P protein binds the alpha-amino group of glycine through its pyridoxal phosphate cofactor; CO(2) is released and the remaining methylamine moiety is then transferred to the lipoamide cofactor of the H protein.</text>
</comment>
<comment type="catalytic activity">
    <reaction evidence="1">
        <text>N(6)-[(R)-lipoyl]-L-lysyl-[glycine-cleavage complex H protein] + glycine + H(+) = N(6)-[(R)-S(8)-aminomethyldihydrolipoyl]-L-lysyl-[glycine-cleavage complex H protein] + CO2</text>
        <dbReference type="Rhea" id="RHEA:24304"/>
        <dbReference type="Rhea" id="RHEA-COMP:10494"/>
        <dbReference type="Rhea" id="RHEA-COMP:10495"/>
        <dbReference type="ChEBI" id="CHEBI:15378"/>
        <dbReference type="ChEBI" id="CHEBI:16526"/>
        <dbReference type="ChEBI" id="CHEBI:57305"/>
        <dbReference type="ChEBI" id="CHEBI:83099"/>
        <dbReference type="ChEBI" id="CHEBI:83143"/>
        <dbReference type="EC" id="1.4.4.2"/>
    </reaction>
</comment>
<comment type="cofactor">
    <cofactor evidence="1">
        <name>pyridoxal 5'-phosphate</name>
        <dbReference type="ChEBI" id="CHEBI:597326"/>
    </cofactor>
</comment>
<comment type="subunit">
    <text evidence="1">The glycine cleavage system is composed of four proteins: P, T, L and H.</text>
</comment>
<comment type="similarity">
    <text evidence="1">Belongs to the GcvP family.</text>
</comment>
<feature type="chain" id="PRO_0000227116" description="Glycine dehydrogenase (decarboxylating) 1">
    <location>
        <begin position="1"/>
        <end position="951"/>
    </location>
</feature>
<feature type="modified residue" description="N6-(pyridoxal phosphate)lysine" evidence="1">
    <location>
        <position position="703"/>
    </location>
</feature>
<organism>
    <name type="scientific">Pseudomonas fluorescens (strain ATCC BAA-477 / NRRL B-23932 / Pf-5)</name>
    <dbReference type="NCBI Taxonomy" id="220664"/>
    <lineage>
        <taxon>Bacteria</taxon>
        <taxon>Pseudomonadati</taxon>
        <taxon>Pseudomonadota</taxon>
        <taxon>Gammaproteobacteria</taxon>
        <taxon>Pseudomonadales</taxon>
        <taxon>Pseudomonadaceae</taxon>
        <taxon>Pseudomonas</taxon>
    </lineage>
</organism>
<sequence>MTVNLSTANEFIARHIGPRQGDEQAMLNSLGFDSLEALSASVIPESIKGTSVLELGHGLSEAQALASIKAIAARNQLFKTYIGQGYYNCHTPSPILRNLLENPAWYTAYTPYQPEISQGRLEALLNFQTLISDLSGLPIANASLLDEGTAAAEAMTFCKRLSKNKGSHAFFASQHCHPQTLDVLRTRAEPLGINVVVGDERKLTDVSPFFGALLQYPASNGDLFDYRELTERFHAANALVAVAADLLALTLLTPPGEFGADVAIGSAQRFGVPLGFGGPHAAYFATRDAFKRDMPGRLVGVSVDRFGKPALRLAMQTREQHIRREKATSNICTAQVLLANIASMYAVYHGPKGLTQIAQRIHQLTAILAKGLVQLGLTVEQESFFDTLSLHTAGRTAALHDKARAQGINLRVIDAERLGLSLDETTTQADVETLWSLLADGKPAPDFAALAAAVTSGIPAALARQSAILSHPVFNRYHSETELMRYLRKLADKDLALDRTMIPLGSCTMKLNAASEMIPITWAEFGALHPFAPAEQSAGYQQLTTELEAMLCAATGYDAVSLQPNAGSQGEYAGLLAIRAYHQSRGDERRDICLIPSSAHGTNPATANMAGMRVVVTACDARGNVDIEDLRAKAIEHREHLAALMITYPSTHGVFEEGIREICGIIHDNGGQVYIDGANMNAMVGLCAPGKFGGDVSHLNLHKTFCIPHGGGGPGVGPIGVKSHLAPFLPGHAALENKKGAVCAAPFGSASILPITWMYISMMGGAGLKRASQLAILNANYISRRLEEHYPVLYTGSNGLVAHECILDLRPLKDSSGISVDDVAKRLIDFGFHAPTMSFPVAGTLMIEPTESESKEELDRFCDAMIRIREEIRAVENGALDKDDNPLKNAPHTAAELVGEWSHPYSREQAVYPVASLVEGKYWPPVGRVDNVFGDRNLVCACPSIESYQDA</sequence>
<keyword id="KW-0560">Oxidoreductase</keyword>
<keyword id="KW-0663">Pyridoxal phosphate</keyword>
<proteinExistence type="inferred from homology"/>
<evidence type="ECO:0000255" key="1">
    <source>
        <dbReference type="HAMAP-Rule" id="MF_00711"/>
    </source>
</evidence>
<gene>
    <name evidence="1" type="primary">gcvP1</name>
    <name type="ordered locus">PFL_4641</name>
</gene>
<dbReference type="EC" id="1.4.4.2" evidence="1"/>
<dbReference type="EMBL" id="CP000076">
    <property type="protein sequence ID" value="AAY93888.1"/>
    <property type="molecule type" value="Genomic_DNA"/>
</dbReference>
<dbReference type="RefSeq" id="WP_011062895.1">
    <property type="nucleotide sequence ID" value="NC_004129.6"/>
</dbReference>
<dbReference type="SMR" id="Q4K7Q8"/>
<dbReference type="STRING" id="220664.PFL_4641"/>
<dbReference type="KEGG" id="pfl:PFL_4641"/>
<dbReference type="PATRIC" id="fig|220664.5.peg.4747"/>
<dbReference type="eggNOG" id="COG0403">
    <property type="taxonomic scope" value="Bacteria"/>
</dbReference>
<dbReference type="eggNOG" id="COG1003">
    <property type="taxonomic scope" value="Bacteria"/>
</dbReference>
<dbReference type="HOGENOM" id="CLU_004620_2_1_6"/>
<dbReference type="Proteomes" id="UP000008540">
    <property type="component" value="Chromosome"/>
</dbReference>
<dbReference type="GO" id="GO:0005829">
    <property type="term" value="C:cytosol"/>
    <property type="evidence" value="ECO:0007669"/>
    <property type="project" value="TreeGrafter"/>
</dbReference>
<dbReference type="GO" id="GO:0005960">
    <property type="term" value="C:glycine cleavage complex"/>
    <property type="evidence" value="ECO:0007669"/>
    <property type="project" value="TreeGrafter"/>
</dbReference>
<dbReference type="GO" id="GO:0016594">
    <property type="term" value="F:glycine binding"/>
    <property type="evidence" value="ECO:0007669"/>
    <property type="project" value="TreeGrafter"/>
</dbReference>
<dbReference type="GO" id="GO:0004375">
    <property type="term" value="F:glycine dehydrogenase (decarboxylating) activity"/>
    <property type="evidence" value="ECO:0007669"/>
    <property type="project" value="UniProtKB-EC"/>
</dbReference>
<dbReference type="GO" id="GO:0030170">
    <property type="term" value="F:pyridoxal phosphate binding"/>
    <property type="evidence" value="ECO:0007669"/>
    <property type="project" value="TreeGrafter"/>
</dbReference>
<dbReference type="GO" id="GO:0019464">
    <property type="term" value="P:glycine decarboxylation via glycine cleavage system"/>
    <property type="evidence" value="ECO:0007669"/>
    <property type="project" value="UniProtKB-UniRule"/>
</dbReference>
<dbReference type="CDD" id="cd00613">
    <property type="entry name" value="GDC-P"/>
    <property type="match status" value="2"/>
</dbReference>
<dbReference type="FunFam" id="3.90.1150.10:FF:000025">
    <property type="entry name" value="Glycine cleavage system P protein"/>
    <property type="match status" value="1"/>
</dbReference>
<dbReference type="FunFam" id="3.40.640.10:FF:000005">
    <property type="entry name" value="Glycine dehydrogenase (decarboxylating), mitochondrial"/>
    <property type="match status" value="1"/>
</dbReference>
<dbReference type="FunFam" id="3.90.1150.10:FF:000007">
    <property type="entry name" value="Glycine dehydrogenase (decarboxylating), mitochondrial"/>
    <property type="match status" value="1"/>
</dbReference>
<dbReference type="FunFam" id="3.40.640.10:FF:000007">
    <property type="entry name" value="glycine dehydrogenase (Decarboxylating), mitochondrial"/>
    <property type="match status" value="1"/>
</dbReference>
<dbReference type="Gene3D" id="3.90.1150.10">
    <property type="entry name" value="Aspartate Aminotransferase, domain 1"/>
    <property type="match status" value="2"/>
</dbReference>
<dbReference type="Gene3D" id="3.40.640.10">
    <property type="entry name" value="Type I PLP-dependent aspartate aminotransferase-like (Major domain)"/>
    <property type="match status" value="2"/>
</dbReference>
<dbReference type="HAMAP" id="MF_00711">
    <property type="entry name" value="GcvP"/>
    <property type="match status" value="1"/>
</dbReference>
<dbReference type="InterPro" id="IPR003437">
    <property type="entry name" value="GcvP"/>
</dbReference>
<dbReference type="InterPro" id="IPR049316">
    <property type="entry name" value="GDC-P_C"/>
</dbReference>
<dbReference type="InterPro" id="IPR049315">
    <property type="entry name" value="GDC-P_N"/>
</dbReference>
<dbReference type="InterPro" id="IPR020581">
    <property type="entry name" value="GDC_P"/>
</dbReference>
<dbReference type="InterPro" id="IPR015424">
    <property type="entry name" value="PyrdxlP-dep_Trfase"/>
</dbReference>
<dbReference type="InterPro" id="IPR015421">
    <property type="entry name" value="PyrdxlP-dep_Trfase_major"/>
</dbReference>
<dbReference type="InterPro" id="IPR015422">
    <property type="entry name" value="PyrdxlP-dep_Trfase_small"/>
</dbReference>
<dbReference type="NCBIfam" id="TIGR00461">
    <property type="entry name" value="gcvP"/>
    <property type="match status" value="1"/>
</dbReference>
<dbReference type="NCBIfam" id="NF003346">
    <property type="entry name" value="PRK04366.1"/>
    <property type="match status" value="1"/>
</dbReference>
<dbReference type="PANTHER" id="PTHR11773:SF1">
    <property type="entry name" value="GLYCINE DEHYDROGENASE (DECARBOXYLATING), MITOCHONDRIAL"/>
    <property type="match status" value="1"/>
</dbReference>
<dbReference type="PANTHER" id="PTHR11773">
    <property type="entry name" value="GLYCINE DEHYDROGENASE, DECARBOXYLATING"/>
    <property type="match status" value="1"/>
</dbReference>
<dbReference type="Pfam" id="PF21478">
    <property type="entry name" value="GcvP2_C"/>
    <property type="match status" value="1"/>
</dbReference>
<dbReference type="Pfam" id="PF02347">
    <property type="entry name" value="GDC-P"/>
    <property type="match status" value="2"/>
</dbReference>
<dbReference type="SUPFAM" id="SSF53383">
    <property type="entry name" value="PLP-dependent transferases"/>
    <property type="match status" value="2"/>
</dbReference>
<name>GCSP1_PSEF5</name>